<reference key="1">
    <citation type="submission" date="2008-12" db="EMBL/GenBank/DDBJ databases">
        <title>Complete sequence of chromosome of Methylobacterium chloromethanicum CM4.</title>
        <authorList>
            <consortium name="US DOE Joint Genome Institute"/>
            <person name="Lucas S."/>
            <person name="Copeland A."/>
            <person name="Lapidus A."/>
            <person name="Glavina del Rio T."/>
            <person name="Dalin E."/>
            <person name="Tice H."/>
            <person name="Bruce D."/>
            <person name="Goodwin L."/>
            <person name="Pitluck S."/>
            <person name="Chertkov O."/>
            <person name="Brettin T."/>
            <person name="Detter J.C."/>
            <person name="Han C."/>
            <person name="Larimer F."/>
            <person name="Land M."/>
            <person name="Hauser L."/>
            <person name="Kyrpides N."/>
            <person name="Mikhailova N."/>
            <person name="Marx C."/>
            <person name="Richardson P."/>
        </authorList>
    </citation>
    <scope>NUCLEOTIDE SEQUENCE [LARGE SCALE GENOMIC DNA]</scope>
    <source>
        <strain>CM4 / NCIMB 13688</strain>
    </source>
</reference>
<feature type="chain" id="PRO_1000196431" description="Small ribosomal subunit protein bS16">
    <location>
        <begin position="1"/>
        <end position="120"/>
    </location>
</feature>
<feature type="region of interest" description="Disordered" evidence="2">
    <location>
        <begin position="81"/>
        <end position="120"/>
    </location>
</feature>
<feature type="compositionally biased region" description="Basic and acidic residues" evidence="2">
    <location>
        <begin position="95"/>
        <end position="110"/>
    </location>
</feature>
<feature type="compositionally biased region" description="Low complexity" evidence="2">
    <location>
        <begin position="111"/>
        <end position="120"/>
    </location>
</feature>
<protein>
    <recommendedName>
        <fullName evidence="1">Small ribosomal subunit protein bS16</fullName>
    </recommendedName>
    <alternativeName>
        <fullName evidence="3">30S ribosomal protein S16</fullName>
    </alternativeName>
</protein>
<dbReference type="EMBL" id="CP001298">
    <property type="protein sequence ID" value="ACK81586.1"/>
    <property type="molecule type" value="Genomic_DNA"/>
</dbReference>
<dbReference type="RefSeq" id="WP_003601547.1">
    <property type="nucleotide sequence ID" value="NC_011757.1"/>
</dbReference>
<dbReference type="SMR" id="B7KZ56"/>
<dbReference type="GeneID" id="72987948"/>
<dbReference type="KEGG" id="mch:Mchl_0664"/>
<dbReference type="HOGENOM" id="CLU_100590_3_1_5"/>
<dbReference type="Proteomes" id="UP000002385">
    <property type="component" value="Chromosome"/>
</dbReference>
<dbReference type="GO" id="GO:0005737">
    <property type="term" value="C:cytoplasm"/>
    <property type="evidence" value="ECO:0007669"/>
    <property type="project" value="UniProtKB-ARBA"/>
</dbReference>
<dbReference type="GO" id="GO:0015935">
    <property type="term" value="C:small ribosomal subunit"/>
    <property type="evidence" value="ECO:0007669"/>
    <property type="project" value="TreeGrafter"/>
</dbReference>
<dbReference type="GO" id="GO:0003735">
    <property type="term" value="F:structural constituent of ribosome"/>
    <property type="evidence" value="ECO:0007669"/>
    <property type="project" value="InterPro"/>
</dbReference>
<dbReference type="GO" id="GO:0006412">
    <property type="term" value="P:translation"/>
    <property type="evidence" value="ECO:0007669"/>
    <property type="project" value="UniProtKB-UniRule"/>
</dbReference>
<dbReference type="Gene3D" id="3.30.1320.10">
    <property type="match status" value="1"/>
</dbReference>
<dbReference type="HAMAP" id="MF_00385">
    <property type="entry name" value="Ribosomal_bS16"/>
    <property type="match status" value="1"/>
</dbReference>
<dbReference type="InterPro" id="IPR000307">
    <property type="entry name" value="Ribosomal_bS16"/>
</dbReference>
<dbReference type="InterPro" id="IPR020592">
    <property type="entry name" value="Ribosomal_bS16_CS"/>
</dbReference>
<dbReference type="InterPro" id="IPR023803">
    <property type="entry name" value="Ribosomal_bS16_dom_sf"/>
</dbReference>
<dbReference type="NCBIfam" id="TIGR00002">
    <property type="entry name" value="S16"/>
    <property type="match status" value="1"/>
</dbReference>
<dbReference type="PANTHER" id="PTHR12919">
    <property type="entry name" value="30S RIBOSOMAL PROTEIN S16"/>
    <property type="match status" value="1"/>
</dbReference>
<dbReference type="PANTHER" id="PTHR12919:SF20">
    <property type="entry name" value="SMALL RIBOSOMAL SUBUNIT PROTEIN BS16M"/>
    <property type="match status" value="1"/>
</dbReference>
<dbReference type="Pfam" id="PF00886">
    <property type="entry name" value="Ribosomal_S16"/>
    <property type="match status" value="1"/>
</dbReference>
<dbReference type="SUPFAM" id="SSF54565">
    <property type="entry name" value="Ribosomal protein S16"/>
    <property type="match status" value="1"/>
</dbReference>
<dbReference type="PROSITE" id="PS00732">
    <property type="entry name" value="RIBOSOMAL_S16"/>
    <property type="match status" value="1"/>
</dbReference>
<keyword id="KW-0687">Ribonucleoprotein</keyword>
<keyword id="KW-0689">Ribosomal protein</keyword>
<accession>B7KZ56</accession>
<evidence type="ECO:0000255" key="1">
    <source>
        <dbReference type="HAMAP-Rule" id="MF_00385"/>
    </source>
</evidence>
<evidence type="ECO:0000256" key="2">
    <source>
        <dbReference type="SAM" id="MobiDB-lite"/>
    </source>
</evidence>
<evidence type="ECO:0000305" key="3"/>
<proteinExistence type="inferred from homology"/>
<comment type="similarity">
    <text evidence="1">Belongs to the bacterial ribosomal protein bS16 family.</text>
</comment>
<name>RS16_METC4</name>
<gene>
    <name evidence="1" type="primary">rpsP</name>
    <name type="ordered locus">Mchl_0664</name>
</gene>
<sequence length="120" mass="13208">MSLKIRLTRGGAKKRPYYRIVIADARAPRDGRFIDKVGAYDPMKAKDDPARIVLDNEKIQSWLAKGAQPTDRVLRFLDAAGLAKRPTRNNPQKAEPGEKAKERAAKRAEKAAAPAEDAAA</sequence>
<organism>
    <name type="scientific">Methylorubrum extorquens (strain CM4 / NCIMB 13688)</name>
    <name type="common">Methylobacterium extorquens</name>
    <dbReference type="NCBI Taxonomy" id="440085"/>
    <lineage>
        <taxon>Bacteria</taxon>
        <taxon>Pseudomonadati</taxon>
        <taxon>Pseudomonadota</taxon>
        <taxon>Alphaproteobacteria</taxon>
        <taxon>Hyphomicrobiales</taxon>
        <taxon>Methylobacteriaceae</taxon>
        <taxon>Methylorubrum</taxon>
    </lineage>
</organism>